<sequence>MEQQKIPQATAKRLPLYYRFIQNLSLSGKQRVSSAELSEAVKVDSATIRRDFSYFGALGKKGYGYNVNYLLSFFRETLDQDDITRVALIGVGNLGTAFLHYNFTKNNNTKIEMAFDVSEEKVGTEIGGIPVYHLDELEERLSTDIQVAILTVPATVAQSVADRLAETNVHGILNFTPARLNVSENIRIHHIDLAVELQTLVYFLKNYPQ</sequence>
<name>REX_BACHK</name>
<reference key="1">
    <citation type="journal article" date="2006" name="J. Bacteriol.">
        <title>Pathogenomic sequence analysis of Bacillus cereus and Bacillus thuringiensis isolates closely related to Bacillus anthracis.</title>
        <authorList>
            <person name="Han C.S."/>
            <person name="Xie G."/>
            <person name="Challacombe J.F."/>
            <person name="Altherr M.R."/>
            <person name="Bhotika S.S."/>
            <person name="Bruce D."/>
            <person name="Campbell C.S."/>
            <person name="Campbell M.L."/>
            <person name="Chen J."/>
            <person name="Chertkov O."/>
            <person name="Cleland C."/>
            <person name="Dimitrijevic M."/>
            <person name="Doggett N.A."/>
            <person name="Fawcett J.J."/>
            <person name="Glavina T."/>
            <person name="Goodwin L.A."/>
            <person name="Hill K.K."/>
            <person name="Hitchcock P."/>
            <person name="Jackson P.J."/>
            <person name="Keim P."/>
            <person name="Kewalramani A.R."/>
            <person name="Longmire J."/>
            <person name="Lucas S."/>
            <person name="Malfatti S."/>
            <person name="McMurry K."/>
            <person name="Meincke L.J."/>
            <person name="Misra M."/>
            <person name="Moseman B.L."/>
            <person name="Mundt M."/>
            <person name="Munk A.C."/>
            <person name="Okinaka R.T."/>
            <person name="Parson-Quintana B."/>
            <person name="Reilly L.P."/>
            <person name="Richardson P."/>
            <person name="Robinson D.L."/>
            <person name="Rubin E."/>
            <person name="Saunders E."/>
            <person name="Tapia R."/>
            <person name="Tesmer J.G."/>
            <person name="Thayer N."/>
            <person name="Thompson L.S."/>
            <person name="Tice H."/>
            <person name="Ticknor L.O."/>
            <person name="Wills P.L."/>
            <person name="Brettin T.S."/>
            <person name="Gilna P."/>
        </authorList>
    </citation>
    <scope>NUCLEOTIDE SEQUENCE [LARGE SCALE GENOMIC DNA]</scope>
    <source>
        <strain>97-27</strain>
    </source>
</reference>
<feature type="chain" id="PRO_1000065388" description="Redox-sensing transcriptional repressor Rex">
    <location>
        <begin position="1"/>
        <end position="209"/>
    </location>
</feature>
<feature type="DNA-binding region" description="H-T-H motif" evidence="1">
    <location>
        <begin position="16"/>
        <end position="55"/>
    </location>
</feature>
<feature type="binding site" evidence="1">
    <location>
        <begin position="90"/>
        <end position="95"/>
    </location>
    <ligand>
        <name>NAD(+)</name>
        <dbReference type="ChEBI" id="CHEBI:57540"/>
    </ligand>
</feature>
<dbReference type="EMBL" id="AE017355">
    <property type="protein sequence ID" value="AAT58955.1"/>
    <property type="molecule type" value="Genomic_DNA"/>
</dbReference>
<dbReference type="RefSeq" id="WP_000437705.1">
    <property type="nucleotide sequence ID" value="NC_005957.1"/>
</dbReference>
<dbReference type="RefSeq" id="YP_034589.1">
    <property type="nucleotide sequence ID" value="NC_005957.1"/>
</dbReference>
<dbReference type="SMR" id="Q6HPD1"/>
<dbReference type="KEGG" id="btk:BT9727_0235"/>
<dbReference type="PATRIC" id="fig|281309.8.peg.251"/>
<dbReference type="HOGENOM" id="CLU_061534_1_1_9"/>
<dbReference type="Proteomes" id="UP000001301">
    <property type="component" value="Chromosome"/>
</dbReference>
<dbReference type="GO" id="GO:0005737">
    <property type="term" value="C:cytoplasm"/>
    <property type="evidence" value="ECO:0007669"/>
    <property type="project" value="UniProtKB-SubCell"/>
</dbReference>
<dbReference type="GO" id="GO:0003677">
    <property type="term" value="F:DNA binding"/>
    <property type="evidence" value="ECO:0007669"/>
    <property type="project" value="UniProtKB-UniRule"/>
</dbReference>
<dbReference type="GO" id="GO:0003700">
    <property type="term" value="F:DNA-binding transcription factor activity"/>
    <property type="evidence" value="ECO:0007669"/>
    <property type="project" value="UniProtKB-UniRule"/>
</dbReference>
<dbReference type="GO" id="GO:0045892">
    <property type="term" value="P:negative regulation of DNA-templated transcription"/>
    <property type="evidence" value="ECO:0007669"/>
    <property type="project" value="InterPro"/>
</dbReference>
<dbReference type="GO" id="GO:0051775">
    <property type="term" value="P:response to redox state"/>
    <property type="evidence" value="ECO:0007669"/>
    <property type="project" value="InterPro"/>
</dbReference>
<dbReference type="Gene3D" id="3.40.50.720">
    <property type="entry name" value="NAD(P)-binding Rossmann-like Domain"/>
    <property type="match status" value="1"/>
</dbReference>
<dbReference type="Gene3D" id="1.10.10.10">
    <property type="entry name" value="Winged helix-like DNA-binding domain superfamily/Winged helix DNA-binding domain"/>
    <property type="match status" value="1"/>
</dbReference>
<dbReference type="HAMAP" id="MF_01131">
    <property type="entry name" value="Rex"/>
    <property type="match status" value="1"/>
</dbReference>
<dbReference type="InterPro" id="IPR003781">
    <property type="entry name" value="CoA-bd"/>
</dbReference>
<dbReference type="InterPro" id="IPR036291">
    <property type="entry name" value="NAD(P)-bd_dom_sf"/>
</dbReference>
<dbReference type="InterPro" id="IPR009718">
    <property type="entry name" value="Rex_DNA-bd_C_dom"/>
</dbReference>
<dbReference type="InterPro" id="IPR022876">
    <property type="entry name" value="Tscrpt_rep_Rex"/>
</dbReference>
<dbReference type="InterPro" id="IPR036388">
    <property type="entry name" value="WH-like_DNA-bd_sf"/>
</dbReference>
<dbReference type="InterPro" id="IPR036390">
    <property type="entry name" value="WH_DNA-bd_sf"/>
</dbReference>
<dbReference type="NCBIfam" id="NF003989">
    <property type="entry name" value="PRK05472.1-3"/>
    <property type="match status" value="1"/>
</dbReference>
<dbReference type="NCBIfam" id="NF003991">
    <property type="entry name" value="PRK05472.1-5"/>
    <property type="match status" value="1"/>
</dbReference>
<dbReference type="NCBIfam" id="NF003994">
    <property type="entry name" value="PRK05472.2-3"/>
    <property type="match status" value="1"/>
</dbReference>
<dbReference type="NCBIfam" id="NF003995">
    <property type="entry name" value="PRK05472.2-4"/>
    <property type="match status" value="1"/>
</dbReference>
<dbReference type="NCBIfam" id="NF003996">
    <property type="entry name" value="PRK05472.2-5"/>
    <property type="match status" value="1"/>
</dbReference>
<dbReference type="PANTHER" id="PTHR35786">
    <property type="entry name" value="REDOX-SENSING TRANSCRIPTIONAL REPRESSOR REX"/>
    <property type="match status" value="1"/>
</dbReference>
<dbReference type="PANTHER" id="PTHR35786:SF1">
    <property type="entry name" value="REDOX-SENSING TRANSCRIPTIONAL REPRESSOR REX 1"/>
    <property type="match status" value="1"/>
</dbReference>
<dbReference type="Pfam" id="PF02629">
    <property type="entry name" value="CoA_binding"/>
    <property type="match status" value="1"/>
</dbReference>
<dbReference type="Pfam" id="PF06971">
    <property type="entry name" value="Put_DNA-bind_N"/>
    <property type="match status" value="1"/>
</dbReference>
<dbReference type="SMART" id="SM00881">
    <property type="entry name" value="CoA_binding"/>
    <property type="match status" value="1"/>
</dbReference>
<dbReference type="SUPFAM" id="SSF51735">
    <property type="entry name" value="NAD(P)-binding Rossmann-fold domains"/>
    <property type="match status" value="1"/>
</dbReference>
<dbReference type="SUPFAM" id="SSF46785">
    <property type="entry name" value="Winged helix' DNA-binding domain"/>
    <property type="match status" value="1"/>
</dbReference>
<accession>Q6HPD1</accession>
<evidence type="ECO:0000255" key="1">
    <source>
        <dbReference type="HAMAP-Rule" id="MF_01131"/>
    </source>
</evidence>
<protein>
    <recommendedName>
        <fullName evidence="1">Redox-sensing transcriptional repressor Rex</fullName>
    </recommendedName>
</protein>
<organism>
    <name type="scientific">Bacillus thuringiensis subsp. konkukian (strain 97-27)</name>
    <dbReference type="NCBI Taxonomy" id="281309"/>
    <lineage>
        <taxon>Bacteria</taxon>
        <taxon>Bacillati</taxon>
        <taxon>Bacillota</taxon>
        <taxon>Bacilli</taxon>
        <taxon>Bacillales</taxon>
        <taxon>Bacillaceae</taxon>
        <taxon>Bacillus</taxon>
        <taxon>Bacillus cereus group</taxon>
    </lineage>
</organism>
<keyword id="KW-0963">Cytoplasm</keyword>
<keyword id="KW-0238">DNA-binding</keyword>
<keyword id="KW-0520">NAD</keyword>
<keyword id="KW-0678">Repressor</keyword>
<keyword id="KW-0804">Transcription</keyword>
<keyword id="KW-0805">Transcription regulation</keyword>
<proteinExistence type="inferred from homology"/>
<comment type="function">
    <text evidence="1">Modulates transcription in response to changes in cellular NADH/NAD(+) redox state.</text>
</comment>
<comment type="subunit">
    <text evidence="1">Homodimer.</text>
</comment>
<comment type="subcellular location">
    <subcellularLocation>
        <location evidence="1">Cytoplasm</location>
    </subcellularLocation>
</comment>
<comment type="similarity">
    <text evidence="1">Belongs to the transcriptional regulatory Rex family.</text>
</comment>
<gene>
    <name evidence="1" type="primary">rex</name>
    <name type="ordered locus">BT9727_0235</name>
</gene>